<comment type="function">
    <text evidence="3">Component of the small ribosomal subunit (PubMed:24930395). The ribosome is a large ribonucleoprotein complex responsible for the synthesis of proteins in the cell (PubMed:24930395).</text>
</comment>
<comment type="subunit">
    <text evidence="3">Component of the 40S small ribosomal subunit.</text>
</comment>
<comment type="subcellular location">
    <subcellularLocation>
        <location evidence="1">Cytoplasm</location>
        <location evidence="1">Cytosol</location>
    </subcellularLocation>
    <subcellularLocation>
        <location evidence="3">Cytoplasm</location>
    </subcellularLocation>
    <subcellularLocation>
        <location evidence="3">Rough endoplasmic reticulum</location>
    </subcellularLocation>
    <text evidence="1 3">Detected on cytosolic polysomes (By similarity). Detected in ribosomes that are associated with the rough endoplasmic reticulum (PubMed:24930395).</text>
</comment>
<comment type="similarity">
    <text evidence="4">Belongs to the eukaryotic ribosomal protein eS26 family.</text>
</comment>
<feature type="chain" id="PRO_0000204513" description="Small ribosomal subunit protein eS26">
    <location>
        <begin position="1"/>
        <end position="115"/>
    </location>
</feature>
<feature type="region of interest" description="Disordered" evidence="2">
    <location>
        <begin position="85"/>
        <end position="115"/>
    </location>
</feature>
<feature type="compositionally biased region" description="Basic and acidic residues" evidence="2">
    <location>
        <begin position="87"/>
        <end position="97"/>
    </location>
</feature>
<feature type="modified residue" description="Phosphoserine" evidence="1">
    <location>
        <position position="54"/>
    </location>
</feature>
<gene>
    <name type="primary">RPS26</name>
</gene>
<accession>P49171</accession>
<accession>A1XQV1</accession>
<sequence length="115" mass="13015">MTKKRRNNGRAKKGRGHVQPIRCTNCARCVPKDKAIKKFVIRNIVEAAAVRDISEASVFDAYVLPKLYVKLHYCVSCAIHSKVVRNRSREARKDRTPPPRFRPAGAAPRPPPKPM</sequence>
<proteinExistence type="evidence at protein level"/>
<name>RS26_PIG</name>
<keyword id="KW-0002">3D-structure</keyword>
<keyword id="KW-0963">Cytoplasm</keyword>
<keyword id="KW-0256">Endoplasmic reticulum</keyword>
<keyword id="KW-0597">Phosphoprotein</keyword>
<keyword id="KW-1185">Reference proteome</keyword>
<keyword id="KW-0687">Ribonucleoprotein</keyword>
<keyword id="KW-0689">Ribosomal protein</keyword>
<organism>
    <name type="scientific">Sus scrofa</name>
    <name type="common">Pig</name>
    <dbReference type="NCBI Taxonomy" id="9823"/>
    <lineage>
        <taxon>Eukaryota</taxon>
        <taxon>Metazoa</taxon>
        <taxon>Chordata</taxon>
        <taxon>Craniata</taxon>
        <taxon>Vertebrata</taxon>
        <taxon>Euteleostomi</taxon>
        <taxon>Mammalia</taxon>
        <taxon>Eutheria</taxon>
        <taxon>Laurasiatheria</taxon>
        <taxon>Artiodactyla</taxon>
        <taxon>Suina</taxon>
        <taxon>Suidae</taxon>
        <taxon>Sus</taxon>
    </lineage>
</organism>
<evidence type="ECO:0000250" key="1">
    <source>
        <dbReference type="UniProtKB" id="P62854"/>
    </source>
</evidence>
<evidence type="ECO:0000256" key="2">
    <source>
        <dbReference type="SAM" id="MobiDB-lite"/>
    </source>
</evidence>
<evidence type="ECO:0000269" key="3">
    <source>
    </source>
</evidence>
<evidence type="ECO:0000305" key="4"/>
<evidence type="ECO:0007744" key="5">
    <source>
        <dbReference type="PDB" id="3J7P"/>
    </source>
</evidence>
<evidence type="ECO:0007744" key="6">
    <source>
        <dbReference type="PDB" id="3J7R"/>
    </source>
</evidence>
<dbReference type="EMBL" id="F14491">
    <property type="protein sequence ID" value="CAA23085.1"/>
    <property type="molecule type" value="mRNA"/>
</dbReference>
<dbReference type="EMBL" id="DQ629173">
    <property type="protein sequence ID" value="ABK55657.1"/>
    <property type="molecule type" value="mRNA"/>
</dbReference>
<dbReference type="RefSeq" id="NP_001090950.1">
    <property type="nucleotide sequence ID" value="NM_001097481.2"/>
</dbReference>
<dbReference type="PDB" id="3J7P">
    <property type="method" value="EM"/>
    <property type="resolution" value="3.50 A"/>
    <property type="chains" value="Sa=1-115"/>
</dbReference>
<dbReference type="PDB" id="3J7R">
    <property type="method" value="EM"/>
    <property type="resolution" value="3.90 A"/>
    <property type="chains" value="Sa=1-115"/>
</dbReference>
<dbReference type="PDBsum" id="3J7P"/>
<dbReference type="PDBsum" id="3J7R"/>
<dbReference type="SMR" id="P49171"/>
<dbReference type="FunCoup" id="P49171">
    <property type="interactions" value="1564"/>
</dbReference>
<dbReference type="IntAct" id="P49171">
    <property type="interactions" value="1"/>
</dbReference>
<dbReference type="PaxDb" id="9823-ENSSSCP00000000393"/>
<dbReference type="PeptideAtlas" id="P49171"/>
<dbReference type="Ensembl" id="ENSSSCT00070059806.1">
    <property type="protein sequence ID" value="ENSSSCP00070050954.1"/>
    <property type="gene ID" value="ENSSSCG00070029753.1"/>
</dbReference>
<dbReference type="Ensembl" id="ENSSSCT00085009037">
    <property type="protein sequence ID" value="ENSSSCP00085006510"/>
    <property type="gene ID" value="ENSSSCG00085004854"/>
</dbReference>
<dbReference type="Ensembl" id="ENSSSCT00115025199">
    <property type="protein sequence ID" value="ENSSSCP00115023895"/>
    <property type="gene ID" value="ENSSSCG00115014532"/>
</dbReference>
<dbReference type="GeneID" id="100037997"/>
<dbReference type="KEGG" id="ssc:100037997"/>
<dbReference type="CTD" id="6231"/>
<dbReference type="eggNOG" id="KOG1768">
    <property type="taxonomic scope" value="Eukaryota"/>
</dbReference>
<dbReference type="InParanoid" id="P49171"/>
<dbReference type="OMA" id="KCYCVSC"/>
<dbReference type="OrthoDB" id="10262653at2759"/>
<dbReference type="Reactome" id="R-SSC-156827">
    <property type="pathway name" value="L13a-mediated translational silencing of Ceruloplasmin expression"/>
</dbReference>
<dbReference type="Reactome" id="R-SSC-1799339">
    <property type="pathway name" value="SRP-dependent cotranslational protein targeting to membrane"/>
</dbReference>
<dbReference type="Reactome" id="R-SSC-72649">
    <property type="pathway name" value="Translation initiation complex formation"/>
</dbReference>
<dbReference type="Reactome" id="R-SSC-72689">
    <property type="pathway name" value="Formation of a pool of free 40S subunits"/>
</dbReference>
<dbReference type="Reactome" id="R-SSC-72695">
    <property type="pathway name" value="Formation of the ternary complex, and subsequently, the 43S complex"/>
</dbReference>
<dbReference type="Reactome" id="R-SSC-72702">
    <property type="pathway name" value="Ribosomal scanning and start codon recognition"/>
</dbReference>
<dbReference type="Reactome" id="R-SSC-72706">
    <property type="pathway name" value="GTP hydrolysis and joining of the 60S ribosomal subunit"/>
</dbReference>
<dbReference type="Reactome" id="R-SSC-975956">
    <property type="pathway name" value="Nonsense Mediated Decay (NMD) independent of the Exon Junction Complex (EJC)"/>
</dbReference>
<dbReference type="Reactome" id="R-SSC-975957">
    <property type="pathway name" value="Nonsense Mediated Decay (NMD) enhanced by the Exon Junction Complex (EJC)"/>
</dbReference>
<dbReference type="Proteomes" id="UP000008227">
    <property type="component" value="Unplaced"/>
</dbReference>
<dbReference type="Proteomes" id="UP000314985">
    <property type="component" value="Chromosome 5"/>
</dbReference>
<dbReference type="Proteomes" id="UP000694570">
    <property type="component" value="Unplaced"/>
</dbReference>
<dbReference type="Proteomes" id="UP000694571">
    <property type="component" value="Unplaced"/>
</dbReference>
<dbReference type="Proteomes" id="UP000694720">
    <property type="component" value="Unplaced"/>
</dbReference>
<dbReference type="Proteomes" id="UP000694722">
    <property type="component" value="Unplaced"/>
</dbReference>
<dbReference type="Proteomes" id="UP000694723">
    <property type="component" value="Unplaced"/>
</dbReference>
<dbReference type="Proteomes" id="UP000694724">
    <property type="component" value="Unplaced"/>
</dbReference>
<dbReference type="Proteomes" id="UP000694725">
    <property type="component" value="Unplaced"/>
</dbReference>
<dbReference type="Proteomes" id="UP000694726">
    <property type="component" value="Unplaced"/>
</dbReference>
<dbReference type="Proteomes" id="UP000694727">
    <property type="component" value="Unplaced"/>
</dbReference>
<dbReference type="Proteomes" id="UP000694728">
    <property type="component" value="Unplaced"/>
</dbReference>
<dbReference type="GO" id="GO:0098556">
    <property type="term" value="C:cytoplasmic side of rough endoplasmic reticulum membrane"/>
    <property type="evidence" value="ECO:0000314"/>
    <property type="project" value="UniProtKB"/>
</dbReference>
<dbReference type="GO" id="GO:0022627">
    <property type="term" value="C:cytosolic small ribosomal subunit"/>
    <property type="evidence" value="ECO:0000314"/>
    <property type="project" value="UniProtKB"/>
</dbReference>
<dbReference type="GO" id="GO:0005840">
    <property type="term" value="C:ribosome"/>
    <property type="evidence" value="ECO:0000250"/>
    <property type="project" value="UniProtKB"/>
</dbReference>
<dbReference type="GO" id="GO:0003729">
    <property type="term" value="F:mRNA binding"/>
    <property type="evidence" value="ECO:0000318"/>
    <property type="project" value="GO_Central"/>
</dbReference>
<dbReference type="GO" id="GO:0003735">
    <property type="term" value="F:structural constituent of ribosome"/>
    <property type="evidence" value="ECO:0000318"/>
    <property type="project" value="GO_Central"/>
</dbReference>
<dbReference type="GO" id="GO:0002181">
    <property type="term" value="P:cytoplasmic translation"/>
    <property type="evidence" value="ECO:0000250"/>
    <property type="project" value="UniProtKB"/>
</dbReference>
<dbReference type="FunFam" id="3.30.1740.20:FF:000001">
    <property type="entry name" value="40S ribosomal protein S26"/>
    <property type="match status" value="1"/>
</dbReference>
<dbReference type="Gene3D" id="3.30.1740.20">
    <property type="entry name" value="Ribosomal protein S26e"/>
    <property type="match status" value="1"/>
</dbReference>
<dbReference type="InterPro" id="IPR000892">
    <property type="entry name" value="Ribosomal_eS26"/>
</dbReference>
<dbReference type="InterPro" id="IPR047864">
    <property type="entry name" value="Ribosomal_eS26_CS"/>
</dbReference>
<dbReference type="InterPro" id="IPR038551">
    <property type="entry name" value="Ribosomal_eS26_sf"/>
</dbReference>
<dbReference type="PANTHER" id="PTHR12538">
    <property type="entry name" value="40S RIBOSOMAL PROTEIN S26"/>
    <property type="match status" value="1"/>
</dbReference>
<dbReference type="PANTHER" id="PTHR12538:SF7">
    <property type="entry name" value="SMALL RIBOSOMAL SUBUNIT PROTEIN ES26-RELATED"/>
    <property type="match status" value="1"/>
</dbReference>
<dbReference type="Pfam" id="PF01283">
    <property type="entry name" value="Ribosomal_S26e"/>
    <property type="match status" value="1"/>
</dbReference>
<dbReference type="PROSITE" id="PS00733">
    <property type="entry name" value="RIBOSOMAL_S26E"/>
    <property type="match status" value="1"/>
</dbReference>
<protein>
    <recommendedName>
        <fullName evidence="4">Small ribosomal subunit protein eS26</fullName>
    </recommendedName>
    <alternativeName>
        <fullName>40S ribosomal protein S26</fullName>
    </alternativeName>
</protein>
<reference key="1">
    <citation type="journal article" date="1996" name="Mamm. Genome">
        <title>Evaluation and characterization of a porcine small intestine cDNA library: analysis of 839 clones.</title>
        <authorList>
            <person name="Winteroe A.K."/>
            <person name="Fredholm M."/>
            <person name="Davies W."/>
        </authorList>
    </citation>
    <scope>NUCLEOTIDE SEQUENCE [LARGE SCALE MRNA]</scope>
    <source>
        <tissue>Small intestine</tissue>
    </source>
</reference>
<reference key="2">
    <citation type="submission" date="2006-05" db="EMBL/GenBank/DDBJ databases">
        <title>Generation and analysis of cDNA sequences derived from a porcine skeletal muscle library.</title>
        <authorList>
            <person name="Cai G."/>
            <person name="Chen Y."/>
            <person name="Wang C."/>
            <person name="Li J."/>
            <person name="Peng G."/>
            <person name="Zhang H."/>
        </authorList>
    </citation>
    <scope>NUCLEOTIDE SEQUENCE [LARGE SCALE MRNA]</scope>
    <source>
        <tissue>Longissimus dorsi muscle</tissue>
    </source>
</reference>
<reference evidence="5 6" key="3">
    <citation type="journal article" date="2014" name="Cell">
        <title>Structure of the mammalian ribosome-Sec61 complex to 3.4 A resolution.</title>
        <authorList>
            <person name="Voorhees R.M."/>
            <person name="Fernandez I.S."/>
            <person name="Scheres S.H."/>
            <person name="Hegde R.S."/>
        </authorList>
    </citation>
    <scope>STRUCTURE BY ELECTRON MICROSCOPY (3.50 ANGSTROMS)</scope>
    <scope>FUNCTION</scope>
    <scope>SUBCELLULAR LOCATION</scope>
    <scope>SUBUNIT</scope>
</reference>